<accession>Q6G8M6</accession>
<feature type="chain" id="PRO_0000389852" description="Acetyl-coenzyme A carboxylase carboxyl transferase subunit beta">
    <location>
        <begin position="1"/>
        <end position="285"/>
    </location>
</feature>
<feature type="domain" description="CoA carboxyltransferase N-terminal" evidence="2">
    <location>
        <begin position="29"/>
        <end position="285"/>
    </location>
</feature>
<feature type="zinc finger region" description="C4-type" evidence="1">
    <location>
        <begin position="33"/>
        <end position="55"/>
    </location>
</feature>
<feature type="binding site" evidence="1">
    <location>
        <position position="33"/>
    </location>
    <ligand>
        <name>Zn(2+)</name>
        <dbReference type="ChEBI" id="CHEBI:29105"/>
    </ligand>
</feature>
<feature type="binding site" evidence="1">
    <location>
        <position position="36"/>
    </location>
    <ligand>
        <name>Zn(2+)</name>
        <dbReference type="ChEBI" id="CHEBI:29105"/>
    </ligand>
</feature>
<feature type="binding site" evidence="1">
    <location>
        <position position="52"/>
    </location>
    <ligand>
        <name>Zn(2+)</name>
        <dbReference type="ChEBI" id="CHEBI:29105"/>
    </ligand>
</feature>
<feature type="binding site" evidence="1">
    <location>
        <position position="55"/>
    </location>
    <ligand>
        <name>Zn(2+)</name>
        <dbReference type="ChEBI" id="CHEBI:29105"/>
    </ligand>
</feature>
<proteinExistence type="inferred from homology"/>
<protein>
    <recommendedName>
        <fullName evidence="1">Acetyl-coenzyme A carboxylase carboxyl transferase subunit beta</fullName>
        <shortName evidence="1">ACCase subunit beta</shortName>
        <shortName evidence="1">Acetyl-CoA carboxylase carboxyltransferase subunit beta</shortName>
        <ecNumber evidence="1">2.1.3.15</ecNumber>
    </recommendedName>
</protein>
<name>ACCD_STAAS</name>
<gene>
    <name evidence="1" type="primary">accD</name>
    <name type="ordered locus">SAS1628</name>
</gene>
<sequence length="285" mass="31871">MFKDFFNRTKKKKYLTVQDSKNNDVPAGIMTKCPKCKKIMYTKELAENLNVCFNCDHHIALTAYKRIEAISDEGSFTEFDKGMTSANPLDFPSYLEKIEKDQQKTGLKEAVVTGTAQLDGMKFGVAVMDSRFRMGSMGSVIGEKICRIIDYCTENRLPFILFSASGGARMQEGIISLMQMGKTSVSLKRHSDAGLLYISYLTHPTTGGVSASFASVGDINLSEPKALIGFAGRRVIEQTINEKLPDDFQTAEFLLEHGQLDKVVHRNNMRQTLSEILKIHQEVTK</sequence>
<organism>
    <name type="scientific">Staphylococcus aureus (strain MSSA476)</name>
    <dbReference type="NCBI Taxonomy" id="282459"/>
    <lineage>
        <taxon>Bacteria</taxon>
        <taxon>Bacillati</taxon>
        <taxon>Bacillota</taxon>
        <taxon>Bacilli</taxon>
        <taxon>Bacillales</taxon>
        <taxon>Staphylococcaceae</taxon>
        <taxon>Staphylococcus</taxon>
    </lineage>
</organism>
<keyword id="KW-0067">ATP-binding</keyword>
<keyword id="KW-0963">Cytoplasm</keyword>
<keyword id="KW-0275">Fatty acid biosynthesis</keyword>
<keyword id="KW-0276">Fatty acid metabolism</keyword>
<keyword id="KW-0444">Lipid biosynthesis</keyword>
<keyword id="KW-0443">Lipid metabolism</keyword>
<keyword id="KW-0479">Metal-binding</keyword>
<keyword id="KW-0547">Nucleotide-binding</keyword>
<keyword id="KW-0808">Transferase</keyword>
<keyword id="KW-0862">Zinc</keyword>
<keyword id="KW-0863">Zinc-finger</keyword>
<comment type="function">
    <text evidence="1">Component of the acetyl coenzyme A carboxylase (ACC) complex. Biotin carboxylase (BC) catalyzes the carboxylation of biotin on its carrier protein (BCCP) and then the CO(2) group is transferred by the transcarboxylase to acetyl-CoA to form malonyl-CoA.</text>
</comment>
<comment type="catalytic activity">
    <reaction evidence="1">
        <text>N(6)-carboxybiotinyl-L-lysyl-[protein] + acetyl-CoA = N(6)-biotinyl-L-lysyl-[protein] + malonyl-CoA</text>
        <dbReference type="Rhea" id="RHEA:54728"/>
        <dbReference type="Rhea" id="RHEA-COMP:10505"/>
        <dbReference type="Rhea" id="RHEA-COMP:10506"/>
        <dbReference type="ChEBI" id="CHEBI:57288"/>
        <dbReference type="ChEBI" id="CHEBI:57384"/>
        <dbReference type="ChEBI" id="CHEBI:83144"/>
        <dbReference type="ChEBI" id="CHEBI:83145"/>
        <dbReference type="EC" id="2.1.3.15"/>
    </reaction>
</comment>
<comment type="cofactor">
    <cofactor evidence="1">
        <name>Zn(2+)</name>
        <dbReference type="ChEBI" id="CHEBI:29105"/>
    </cofactor>
    <text evidence="1">Binds 1 zinc ion per subunit.</text>
</comment>
<comment type="pathway">
    <text evidence="1">Lipid metabolism; malonyl-CoA biosynthesis; malonyl-CoA from acetyl-CoA: step 1/1.</text>
</comment>
<comment type="subunit">
    <text evidence="1">Acetyl-CoA carboxylase is a heterohexamer composed of biotin carboxyl carrier protein (AccB), biotin carboxylase (AccC) and two subunits each of ACCase subunit alpha (AccA) and ACCase subunit beta (AccD).</text>
</comment>
<comment type="subcellular location">
    <subcellularLocation>
        <location evidence="1">Cytoplasm</location>
    </subcellularLocation>
</comment>
<comment type="similarity">
    <text evidence="1">Belongs to the AccD/PCCB family.</text>
</comment>
<evidence type="ECO:0000255" key="1">
    <source>
        <dbReference type="HAMAP-Rule" id="MF_01395"/>
    </source>
</evidence>
<evidence type="ECO:0000255" key="2">
    <source>
        <dbReference type="PROSITE-ProRule" id="PRU01136"/>
    </source>
</evidence>
<dbReference type="EC" id="2.1.3.15" evidence="1"/>
<dbReference type="EMBL" id="BX571857">
    <property type="protein sequence ID" value="CAG43430.1"/>
    <property type="molecule type" value="Genomic_DNA"/>
</dbReference>
<dbReference type="RefSeq" id="WP_000471572.1">
    <property type="nucleotide sequence ID" value="NC_002953.3"/>
</dbReference>
<dbReference type="SMR" id="Q6G8M6"/>
<dbReference type="KEGG" id="sas:SAS1628"/>
<dbReference type="HOGENOM" id="CLU_015486_1_0_9"/>
<dbReference type="UniPathway" id="UPA00655">
    <property type="reaction ID" value="UER00711"/>
</dbReference>
<dbReference type="GO" id="GO:0009317">
    <property type="term" value="C:acetyl-CoA carboxylase complex"/>
    <property type="evidence" value="ECO:0007669"/>
    <property type="project" value="InterPro"/>
</dbReference>
<dbReference type="GO" id="GO:0003989">
    <property type="term" value="F:acetyl-CoA carboxylase activity"/>
    <property type="evidence" value="ECO:0007669"/>
    <property type="project" value="InterPro"/>
</dbReference>
<dbReference type="GO" id="GO:0005524">
    <property type="term" value="F:ATP binding"/>
    <property type="evidence" value="ECO:0007669"/>
    <property type="project" value="UniProtKB-KW"/>
</dbReference>
<dbReference type="GO" id="GO:0016743">
    <property type="term" value="F:carboxyl- or carbamoyltransferase activity"/>
    <property type="evidence" value="ECO:0007669"/>
    <property type="project" value="UniProtKB-UniRule"/>
</dbReference>
<dbReference type="GO" id="GO:0008270">
    <property type="term" value="F:zinc ion binding"/>
    <property type="evidence" value="ECO:0007669"/>
    <property type="project" value="UniProtKB-UniRule"/>
</dbReference>
<dbReference type="GO" id="GO:0006633">
    <property type="term" value="P:fatty acid biosynthetic process"/>
    <property type="evidence" value="ECO:0007669"/>
    <property type="project" value="UniProtKB-KW"/>
</dbReference>
<dbReference type="GO" id="GO:2001295">
    <property type="term" value="P:malonyl-CoA biosynthetic process"/>
    <property type="evidence" value="ECO:0007669"/>
    <property type="project" value="UniProtKB-UniRule"/>
</dbReference>
<dbReference type="Gene3D" id="3.90.226.10">
    <property type="entry name" value="2-enoyl-CoA Hydratase, Chain A, domain 1"/>
    <property type="match status" value="1"/>
</dbReference>
<dbReference type="HAMAP" id="MF_01395">
    <property type="entry name" value="AcetylCoA_CT_beta"/>
    <property type="match status" value="1"/>
</dbReference>
<dbReference type="InterPro" id="IPR034733">
    <property type="entry name" value="AcCoA_carboxyl_beta"/>
</dbReference>
<dbReference type="InterPro" id="IPR000438">
    <property type="entry name" value="Acetyl_CoA_COase_Trfase_b_su"/>
</dbReference>
<dbReference type="InterPro" id="IPR029045">
    <property type="entry name" value="ClpP/crotonase-like_dom_sf"/>
</dbReference>
<dbReference type="InterPro" id="IPR011762">
    <property type="entry name" value="COA_CT_N"/>
</dbReference>
<dbReference type="InterPro" id="IPR041010">
    <property type="entry name" value="Znf-ACC"/>
</dbReference>
<dbReference type="NCBIfam" id="TIGR00515">
    <property type="entry name" value="accD"/>
    <property type="match status" value="1"/>
</dbReference>
<dbReference type="PANTHER" id="PTHR42995">
    <property type="entry name" value="ACETYL-COENZYME A CARBOXYLASE CARBOXYL TRANSFERASE SUBUNIT BETA, CHLOROPLASTIC"/>
    <property type="match status" value="1"/>
</dbReference>
<dbReference type="PANTHER" id="PTHR42995:SF5">
    <property type="entry name" value="ACETYL-COENZYME A CARBOXYLASE CARBOXYL TRANSFERASE SUBUNIT BETA, CHLOROPLASTIC"/>
    <property type="match status" value="1"/>
</dbReference>
<dbReference type="Pfam" id="PF01039">
    <property type="entry name" value="Carboxyl_trans"/>
    <property type="match status" value="1"/>
</dbReference>
<dbReference type="Pfam" id="PF17848">
    <property type="entry name" value="Zn_ribbon_ACC"/>
    <property type="match status" value="1"/>
</dbReference>
<dbReference type="PRINTS" id="PR01070">
    <property type="entry name" value="ACCCTRFRASEB"/>
</dbReference>
<dbReference type="SUPFAM" id="SSF52096">
    <property type="entry name" value="ClpP/crotonase"/>
    <property type="match status" value="1"/>
</dbReference>
<dbReference type="PROSITE" id="PS50980">
    <property type="entry name" value="COA_CT_NTER"/>
    <property type="match status" value="1"/>
</dbReference>
<reference key="1">
    <citation type="journal article" date="2004" name="Proc. Natl. Acad. Sci. U.S.A.">
        <title>Complete genomes of two clinical Staphylococcus aureus strains: evidence for the rapid evolution of virulence and drug resistance.</title>
        <authorList>
            <person name="Holden M.T.G."/>
            <person name="Feil E.J."/>
            <person name="Lindsay J.A."/>
            <person name="Peacock S.J."/>
            <person name="Day N.P.J."/>
            <person name="Enright M.C."/>
            <person name="Foster T.J."/>
            <person name="Moore C.E."/>
            <person name="Hurst L."/>
            <person name="Atkin R."/>
            <person name="Barron A."/>
            <person name="Bason N."/>
            <person name="Bentley S.D."/>
            <person name="Chillingworth C."/>
            <person name="Chillingworth T."/>
            <person name="Churcher C."/>
            <person name="Clark L."/>
            <person name="Corton C."/>
            <person name="Cronin A."/>
            <person name="Doggett J."/>
            <person name="Dowd L."/>
            <person name="Feltwell T."/>
            <person name="Hance Z."/>
            <person name="Harris B."/>
            <person name="Hauser H."/>
            <person name="Holroyd S."/>
            <person name="Jagels K."/>
            <person name="James K.D."/>
            <person name="Lennard N."/>
            <person name="Line A."/>
            <person name="Mayes R."/>
            <person name="Moule S."/>
            <person name="Mungall K."/>
            <person name="Ormond D."/>
            <person name="Quail M.A."/>
            <person name="Rabbinowitsch E."/>
            <person name="Rutherford K.M."/>
            <person name="Sanders M."/>
            <person name="Sharp S."/>
            <person name="Simmonds M."/>
            <person name="Stevens K."/>
            <person name="Whitehead S."/>
            <person name="Barrell B.G."/>
            <person name="Spratt B.G."/>
            <person name="Parkhill J."/>
        </authorList>
    </citation>
    <scope>NUCLEOTIDE SEQUENCE [LARGE SCALE GENOMIC DNA]</scope>
    <source>
        <strain>MSSA476</strain>
    </source>
</reference>